<evidence type="ECO:0000255" key="1">
    <source>
        <dbReference type="HAMAP-Rule" id="MF_03057"/>
    </source>
</evidence>
<evidence type="ECO:0000256" key="2">
    <source>
        <dbReference type="SAM" id="MobiDB-lite"/>
    </source>
</evidence>
<sequence length="292" mass="32796">MSAPRLIQRFARPSLSPFFLRTTLARRSFGSSAIRPKDDNGRAPSTAPEHREYQTNRPPNQHVPNTTSTMTRDFPKAGEKSVPPEFVSAADPNYKPADPYPGKVEHFTGGRQETGAQKPELGVGEMEGITFKVEPLKRTGEDVSTIRARLLYQSRKRGILESDLLLSTFADVYLSKMNKEQLQEYDRFLDENDWDIYYWATQDPPTEDNVAEDTPTETWKRTGAKSGEWAQTVGAYKAAYRPVPSRWADSEVLRLLRQHVQDNSATGFHAAKSKKTGGAGLGRMPNVQVFDS</sequence>
<dbReference type="EMBL" id="EQ963483">
    <property type="protein sequence ID" value="EED47145.1"/>
    <property type="molecule type" value="Genomic_DNA"/>
</dbReference>
<dbReference type="RefSeq" id="XP_002383325.1">
    <property type="nucleotide sequence ID" value="XM_002383284.1"/>
</dbReference>
<dbReference type="SMR" id="B8NT06"/>
<dbReference type="STRING" id="332952.B8NT06"/>
<dbReference type="EnsemblFungi" id="EED47145">
    <property type="protein sequence ID" value="EED47145"/>
    <property type="gene ID" value="AFLA_051990"/>
</dbReference>
<dbReference type="VEuPathDB" id="FungiDB:AFLA_011095"/>
<dbReference type="eggNOG" id="KOG3326">
    <property type="taxonomic scope" value="Eukaryota"/>
</dbReference>
<dbReference type="HOGENOM" id="CLU_943336_0_0_1"/>
<dbReference type="OMA" id="EMEGAKF"/>
<dbReference type="GO" id="GO:0005759">
    <property type="term" value="C:mitochondrial matrix"/>
    <property type="evidence" value="ECO:0000250"/>
    <property type="project" value="UniProtKB"/>
</dbReference>
<dbReference type="GO" id="GO:0006121">
    <property type="term" value="P:mitochondrial electron transport, succinate to ubiquinone"/>
    <property type="evidence" value="ECO:0000250"/>
    <property type="project" value="UniProtKB"/>
</dbReference>
<dbReference type="GO" id="GO:0034553">
    <property type="term" value="P:mitochondrial respiratory chain complex II assembly"/>
    <property type="evidence" value="ECO:0007669"/>
    <property type="project" value="TreeGrafter"/>
</dbReference>
<dbReference type="GO" id="GO:0018293">
    <property type="term" value="P:protein-FAD linkage"/>
    <property type="evidence" value="ECO:0000250"/>
    <property type="project" value="UniProtKB"/>
</dbReference>
<dbReference type="GO" id="GO:0006099">
    <property type="term" value="P:tricarboxylic acid cycle"/>
    <property type="evidence" value="ECO:0007669"/>
    <property type="project" value="TreeGrafter"/>
</dbReference>
<dbReference type="FunFam" id="1.10.150.250:FF:000002">
    <property type="entry name" value="Succinate dehydrogenase assembly factor 2, mitochondrial"/>
    <property type="match status" value="1"/>
</dbReference>
<dbReference type="Gene3D" id="1.10.150.250">
    <property type="entry name" value="Flavinator of succinate dehydrogenase"/>
    <property type="match status" value="1"/>
</dbReference>
<dbReference type="HAMAP" id="MF_03057">
    <property type="entry name" value="SDHAF2"/>
    <property type="match status" value="1"/>
</dbReference>
<dbReference type="InterPro" id="IPR005631">
    <property type="entry name" value="SDH"/>
</dbReference>
<dbReference type="InterPro" id="IPR036714">
    <property type="entry name" value="SDH_sf"/>
</dbReference>
<dbReference type="InterPro" id="IPR028882">
    <property type="entry name" value="SDHAF2"/>
</dbReference>
<dbReference type="PANTHER" id="PTHR12469">
    <property type="entry name" value="PROTEIN EMI5 HOMOLOG, MITOCHONDRIAL"/>
    <property type="match status" value="1"/>
</dbReference>
<dbReference type="PANTHER" id="PTHR12469:SF2">
    <property type="entry name" value="SUCCINATE DEHYDROGENASE ASSEMBLY FACTOR 2, MITOCHONDRIAL"/>
    <property type="match status" value="1"/>
</dbReference>
<dbReference type="Pfam" id="PF03937">
    <property type="entry name" value="Sdh5"/>
    <property type="match status" value="1"/>
</dbReference>
<dbReference type="SUPFAM" id="SSF109910">
    <property type="entry name" value="YgfY-like"/>
    <property type="match status" value="1"/>
</dbReference>
<proteinExistence type="inferred from homology"/>
<reference key="1">
    <citation type="journal article" date="2015" name="Genome Announc.">
        <title>Genome sequence of Aspergillus flavus NRRL 3357, a strain that causes aflatoxin contamination of food and feed.</title>
        <authorList>
            <person name="Nierman W.C."/>
            <person name="Yu J."/>
            <person name="Fedorova-Abrams N.D."/>
            <person name="Losada L."/>
            <person name="Cleveland T.E."/>
            <person name="Bhatnagar D."/>
            <person name="Bennett J.W."/>
            <person name="Dean R."/>
            <person name="Payne G.A."/>
        </authorList>
    </citation>
    <scope>NUCLEOTIDE SEQUENCE [LARGE SCALE GENOMIC DNA]</scope>
    <source>
        <strain>ATCC 200026 / FGSC A1120 / IAM 13836 / NRRL 3357 / JCM 12722 / SRRC 167</strain>
    </source>
</reference>
<comment type="function">
    <text evidence="1">Plays an essential role in the assembly of succinate dehydrogenase (SDH), an enzyme complex (also referred to as respiratory complex II) that is a component of both the tricarboxylic acid (TCA) cycle and the mitochondrial electron transport chain, and which couples the oxidation of succinate to fumarate with the reduction of ubiquinone (coenzyme Q) to ubiquinol. Required for flavinylation (covalent attachment of FAD) of the flavoprotein subunit of the SDH catalytic dimer.</text>
</comment>
<comment type="subunit">
    <text evidence="1">Interacts with the flavoprotein subunit within the SDH catalytic dimer.</text>
</comment>
<comment type="subcellular location">
    <subcellularLocation>
        <location evidence="1">Mitochondrion matrix</location>
    </subcellularLocation>
</comment>
<comment type="miscellaneous">
    <text evidence="1">This protein may be expected to contain an N-terminal transit peptide but none has been predicted.</text>
</comment>
<comment type="similarity">
    <text evidence="1">Belongs to the SDHAF2 family.</text>
</comment>
<name>SDHF2_ASPFN</name>
<keyword id="KW-0143">Chaperone</keyword>
<keyword id="KW-0496">Mitochondrion</keyword>
<organism>
    <name type="scientific">Aspergillus flavus (strain ATCC 200026 / FGSC A1120 / IAM 13836 / NRRL 3357 / JCM 12722 / SRRC 167)</name>
    <dbReference type="NCBI Taxonomy" id="332952"/>
    <lineage>
        <taxon>Eukaryota</taxon>
        <taxon>Fungi</taxon>
        <taxon>Dikarya</taxon>
        <taxon>Ascomycota</taxon>
        <taxon>Pezizomycotina</taxon>
        <taxon>Eurotiomycetes</taxon>
        <taxon>Eurotiomycetidae</taxon>
        <taxon>Eurotiales</taxon>
        <taxon>Aspergillaceae</taxon>
        <taxon>Aspergillus</taxon>
        <taxon>Aspergillus subgen. Circumdati</taxon>
    </lineage>
</organism>
<accession>B8NT06</accession>
<feature type="chain" id="PRO_0000383187" description="Succinate dehydrogenase assembly factor 2, mitochondrial">
    <location>
        <begin position="1"/>
        <end position="292"/>
    </location>
</feature>
<feature type="region of interest" description="Disordered" evidence="2">
    <location>
        <begin position="27"/>
        <end position="68"/>
    </location>
</feature>
<feature type="region of interest" description="Disordered" evidence="2">
    <location>
        <begin position="266"/>
        <end position="292"/>
    </location>
</feature>
<feature type="compositionally biased region" description="Polar residues" evidence="2">
    <location>
        <begin position="55"/>
        <end position="68"/>
    </location>
</feature>
<protein>
    <recommendedName>
        <fullName evidence="1">Succinate dehydrogenase assembly factor 2, mitochondrial</fullName>
        <shortName evidence="1">SDH assembly factor 2</shortName>
        <shortName evidence="1">SDHAF2</shortName>
    </recommendedName>
</protein>
<gene>
    <name type="ORF">AFLA_051990</name>
</gene>